<proteinExistence type="inferred from homology"/>
<name>SYM_LEPIC</name>
<comment type="function">
    <text evidence="1">Is required not only for elongation of protein synthesis but also for the initiation of all mRNA translation through initiator tRNA(fMet) aminoacylation.</text>
</comment>
<comment type="catalytic activity">
    <reaction evidence="1">
        <text>tRNA(Met) + L-methionine + ATP = L-methionyl-tRNA(Met) + AMP + diphosphate</text>
        <dbReference type="Rhea" id="RHEA:13481"/>
        <dbReference type="Rhea" id="RHEA-COMP:9667"/>
        <dbReference type="Rhea" id="RHEA-COMP:9698"/>
        <dbReference type="ChEBI" id="CHEBI:30616"/>
        <dbReference type="ChEBI" id="CHEBI:33019"/>
        <dbReference type="ChEBI" id="CHEBI:57844"/>
        <dbReference type="ChEBI" id="CHEBI:78442"/>
        <dbReference type="ChEBI" id="CHEBI:78530"/>
        <dbReference type="ChEBI" id="CHEBI:456215"/>
        <dbReference type="EC" id="6.1.1.10"/>
    </reaction>
</comment>
<comment type="cofactor">
    <cofactor evidence="1">
        <name>Zn(2+)</name>
        <dbReference type="ChEBI" id="CHEBI:29105"/>
    </cofactor>
    <text evidence="1">Binds 1 zinc ion per subunit.</text>
</comment>
<comment type="subunit">
    <text evidence="1">Homodimer.</text>
</comment>
<comment type="subcellular location">
    <subcellularLocation>
        <location evidence="1">Cytoplasm</location>
    </subcellularLocation>
</comment>
<comment type="similarity">
    <text evidence="1">Belongs to the class-I aminoacyl-tRNA synthetase family. MetG type 1 subfamily.</text>
</comment>
<accession>Q72MR4</accession>
<feature type="chain" id="PRO_0000139140" description="Methionine--tRNA ligase">
    <location>
        <begin position="1"/>
        <end position="715"/>
    </location>
</feature>
<feature type="domain" description="tRNA-binding" evidence="1">
    <location>
        <begin position="614"/>
        <end position="715"/>
    </location>
</feature>
<feature type="short sequence motif" description="'HIGH' region">
    <location>
        <begin position="17"/>
        <end position="27"/>
    </location>
</feature>
<feature type="short sequence motif" description="'KMSKS' region">
    <location>
        <begin position="359"/>
        <end position="363"/>
    </location>
</feature>
<feature type="binding site" evidence="1">
    <location>
        <position position="148"/>
    </location>
    <ligand>
        <name>Zn(2+)</name>
        <dbReference type="ChEBI" id="CHEBI:29105"/>
    </ligand>
</feature>
<feature type="binding site" evidence="1">
    <location>
        <position position="151"/>
    </location>
    <ligand>
        <name>Zn(2+)</name>
        <dbReference type="ChEBI" id="CHEBI:29105"/>
    </ligand>
</feature>
<feature type="binding site" evidence="1">
    <location>
        <position position="161"/>
    </location>
    <ligand>
        <name>Zn(2+)</name>
        <dbReference type="ChEBI" id="CHEBI:29105"/>
    </ligand>
</feature>
<feature type="binding site" evidence="1">
    <location>
        <position position="164"/>
    </location>
    <ligand>
        <name>Zn(2+)</name>
        <dbReference type="ChEBI" id="CHEBI:29105"/>
    </ligand>
</feature>
<feature type="binding site" evidence="1">
    <location>
        <position position="362"/>
    </location>
    <ligand>
        <name>ATP</name>
        <dbReference type="ChEBI" id="CHEBI:30616"/>
    </ligand>
</feature>
<evidence type="ECO:0000255" key="1">
    <source>
        <dbReference type="HAMAP-Rule" id="MF_00098"/>
    </source>
</evidence>
<organism>
    <name type="scientific">Leptospira interrogans serogroup Icterohaemorrhagiae serovar copenhageni (strain Fiocruz L1-130)</name>
    <dbReference type="NCBI Taxonomy" id="267671"/>
    <lineage>
        <taxon>Bacteria</taxon>
        <taxon>Pseudomonadati</taxon>
        <taxon>Spirochaetota</taxon>
        <taxon>Spirochaetia</taxon>
        <taxon>Leptospirales</taxon>
        <taxon>Leptospiraceae</taxon>
        <taxon>Leptospira</taxon>
    </lineage>
</organism>
<gene>
    <name evidence="1" type="primary">metG</name>
    <name type="ordered locus">LIC_13129</name>
</gene>
<reference key="1">
    <citation type="journal article" date="2004" name="J. Bacteriol.">
        <title>Comparative genomics of two Leptospira interrogans serovars reveals novel insights into physiology and pathogenesis.</title>
        <authorList>
            <person name="Nascimento A.L.T.O."/>
            <person name="Ko A.I."/>
            <person name="Martins E.A.L."/>
            <person name="Monteiro-Vitorello C.B."/>
            <person name="Ho P.L."/>
            <person name="Haake D.A."/>
            <person name="Verjovski-Almeida S."/>
            <person name="Hartskeerl R.A."/>
            <person name="Marques M.V."/>
            <person name="Oliveira M.C."/>
            <person name="Menck C.F.M."/>
            <person name="Leite L.C.C."/>
            <person name="Carrer H."/>
            <person name="Coutinho L.L."/>
            <person name="Degrave W.M."/>
            <person name="Dellagostin O.A."/>
            <person name="El-Dorry H."/>
            <person name="Ferro E.S."/>
            <person name="Ferro M.I.T."/>
            <person name="Furlan L.R."/>
            <person name="Gamberini M."/>
            <person name="Giglioti E.A."/>
            <person name="Goes-Neto A."/>
            <person name="Goldman G.H."/>
            <person name="Goldman M.H.S."/>
            <person name="Harakava R."/>
            <person name="Jeronimo S.M.B."/>
            <person name="Junqueira-de-Azevedo I.L.M."/>
            <person name="Kimura E.T."/>
            <person name="Kuramae E.E."/>
            <person name="Lemos E.G.M."/>
            <person name="Lemos M.V.F."/>
            <person name="Marino C.L."/>
            <person name="Nunes L.R."/>
            <person name="de Oliveira R.C."/>
            <person name="Pereira G.G."/>
            <person name="Reis M.S."/>
            <person name="Schriefer A."/>
            <person name="Siqueira W.J."/>
            <person name="Sommer P."/>
            <person name="Tsai S.M."/>
            <person name="Simpson A.J.G."/>
            <person name="Ferro J.A."/>
            <person name="Camargo L.E.A."/>
            <person name="Kitajima J.P."/>
            <person name="Setubal J.C."/>
            <person name="Van Sluys M.A."/>
        </authorList>
    </citation>
    <scope>NUCLEOTIDE SEQUENCE [LARGE SCALE GENOMIC DNA]</scope>
    <source>
        <strain>Fiocruz L1-130</strain>
    </source>
</reference>
<dbReference type="EC" id="6.1.1.10" evidence="1"/>
<dbReference type="EMBL" id="AE016823">
    <property type="protein sequence ID" value="AAS71674.1"/>
    <property type="molecule type" value="Genomic_DNA"/>
</dbReference>
<dbReference type="RefSeq" id="WP_001089002.1">
    <property type="nucleotide sequence ID" value="NC_005823.1"/>
</dbReference>
<dbReference type="SMR" id="Q72MR4"/>
<dbReference type="GeneID" id="61143001"/>
<dbReference type="KEGG" id="lic:LIC_13129"/>
<dbReference type="HOGENOM" id="CLU_009710_7_0_12"/>
<dbReference type="Proteomes" id="UP000007037">
    <property type="component" value="Chromosome I"/>
</dbReference>
<dbReference type="GO" id="GO:0005829">
    <property type="term" value="C:cytosol"/>
    <property type="evidence" value="ECO:0007669"/>
    <property type="project" value="TreeGrafter"/>
</dbReference>
<dbReference type="GO" id="GO:0005524">
    <property type="term" value="F:ATP binding"/>
    <property type="evidence" value="ECO:0007669"/>
    <property type="project" value="UniProtKB-UniRule"/>
</dbReference>
<dbReference type="GO" id="GO:0046872">
    <property type="term" value="F:metal ion binding"/>
    <property type="evidence" value="ECO:0007669"/>
    <property type="project" value="UniProtKB-KW"/>
</dbReference>
<dbReference type="GO" id="GO:0004825">
    <property type="term" value="F:methionine-tRNA ligase activity"/>
    <property type="evidence" value="ECO:0007669"/>
    <property type="project" value="UniProtKB-UniRule"/>
</dbReference>
<dbReference type="GO" id="GO:0000049">
    <property type="term" value="F:tRNA binding"/>
    <property type="evidence" value="ECO:0007669"/>
    <property type="project" value="UniProtKB-KW"/>
</dbReference>
<dbReference type="GO" id="GO:0006431">
    <property type="term" value="P:methionyl-tRNA aminoacylation"/>
    <property type="evidence" value="ECO:0007669"/>
    <property type="project" value="UniProtKB-UniRule"/>
</dbReference>
<dbReference type="CDD" id="cd07957">
    <property type="entry name" value="Anticodon_Ia_Met"/>
    <property type="match status" value="1"/>
</dbReference>
<dbReference type="CDD" id="cd00814">
    <property type="entry name" value="MetRS_core"/>
    <property type="match status" value="1"/>
</dbReference>
<dbReference type="CDD" id="cd02800">
    <property type="entry name" value="tRNA_bind_EcMetRS_like"/>
    <property type="match status" value="1"/>
</dbReference>
<dbReference type="FunFam" id="2.20.28.20:FF:000001">
    <property type="entry name" value="Methionine--tRNA ligase"/>
    <property type="match status" value="1"/>
</dbReference>
<dbReference type="FunFam" id="2.40.50.140:FF:000042">
    <property type="entry name" value="Methionine--tRNA ligase"/>
    <property type="match status" value="1"/>
</dbReference>
<dbReference type="Gene3D" id="3.40.50.620">
    <property type="entry name" value="HUPs"/>
    <property type="match status" value="1"/>
</dbReference>
<dbReference type="Gene3D" id="1.10.730.10">
    <property type="entry name" value="Isoleucyl-tRNA Synthetase, Domain 1"/>
    <property type="match status" value="1"/>
</dbReference>
<dbReference type="Gene3D" id="2.20.28.20">
    <property type="entry name" value="Methionyl-tRNA synthetase, Zn-domain"/>
    <property type="match status" value="1"/>
</dbReference>
<dbReference type="Gene3D" id="2.40.50.140">
    <property type="entry name" value="Nucleic acid-binding proteins"/>
    <property type="match status" value="1"/>
</dbReference>
<dbReference type="HAMAP" id="MF_00098">
    <property type="entry name" value="Met_tRNA_synth_type1"/>
    <property type="match status" value="1"/>
</dbReference>
<dbReference type="InterPro" id="IPR001412">
    <property type="entry name" value="aa-tRNA-synth_I_CS"/>
</dbReference>
<dbReference type="InterPro" id="IPR041872">
    <property type="entry name" value="Anticodon_Met"/>
</dbReference>
<dbReference type="InterPro" id="IPR004495">
    <property type="entry name" value="Met-tRNA-synth_bsu_C"/>
</dbReference>
<dbReference type="InterPro" id="IPR023458">
    <property type="entry name" value="Met-tRNA_ligase_1"/>
</dbReference>
<dbReference type="InterPro" id="IPR014758">
    <property type="entry name" value="Met-tRNA_synth"/>
</dbReference>
<dbReference type="InterPro" id="IPR015413">
    <property type="entry name" value="Methionyl/Leucyl_tRNA_Synth"/>
</dbReference>
<dbReference type="InterPro" id="IPR033911">
    <property type="entry name" value="MetRS_core"/>
</dbReference>
<dbReference type="InterPro" id="IPR029038">
    <property type="entry name" value="MetRS_Zn"/>
</dbReference>
<dbReference type="InterPro" id="IPR012340">
    <property type="entry name" value="NA-bd_OB-fold"/>
</dbReference>
<dbReference type="InterPro" id="IPR014729">
    <property type="entry name" value="Rossmann-like_a/b/a_fold"/>
</dbReference>
<dbReference type="InterPro" id="IPR002547">
    <property type="entry name" value="tRNA-bd_dom"/>
</dbReference>
<dbReference type="InterPro" id="IPR009080">
    <property type="entry name" value="tRNAsynth_Ia_anticodon-bd"/>
</dbReference>
<dbReference type="NCBIfam" id="TIGR00398">
    <property type="entry name" value="metG"/>
    <property type="match status" value="1"/>
</dbReference>
<dbReference type="NCBIfam" id="NF001100">
    <property type="entry name" value="PRK00133.1"/>
    <property type="match status" value="1"/>
</dbReference>
<dbReference type="PANTHER" id="PTHR45765">
    <property type="entry name" value="METHIONINE--TRNA LIGASE"/>
    <property type="match status" value="1"/>
</dbReference>
<dbReference type="PANTHER" id="PTHR45765:SF1">
    <property type="entry name" value="METHIONINE--TRNA LIGASE, CYTOPLASMIC"/>
    <property type="match status" value="1"/>
</dbReference>
<dbReference type="Pfam" id="PF19303">
    <property type="entry name" value="Anticodon_3"/>
    <property type="match status" value="1"/>
</dbReference>
<dbReference type="Pfam" id="PF09334">
    <property type="entry name" value="tRNA-synt_1g"/>
    <property type="match status" value="1"/>
</dbReference>
<dbReference type="Pfam" id="PF01588">
    <property type="entry name" value="tRNA_bind"/>
    <property type="match status" value="1"/>
</dbReference>
<dbReference type="PRINTS" id="PR01041">
    <property type="entry name" value="TRNASYNTHMET"/>
</dbReference>
<dbReference type="SUPFAM" id="SSF47323">
    <property type="entry name" value="Anticodon-binding domain of a subclass of class I aminoacyl-tRNA synthetases"/>
    <property type="match status" value="1"/>
</dbReference>
<dbReference type="SUPFAM" id="SSF57770">
    <property type="entry name" value="Methionyl-tRNA synthetase (MetRS), Zn-domain"/>
    <property type="match status" value="1"/>
</dbReference>
<dbReference type="SUPFAM" id="SSF50249">
    <property type="entry name" value="Nucleic acid-binding proteins"/>
    <property type="match status" value="1"/>
</dbReference>
<dbReference type="SUPFAM" id="SSF52374">
    <property type="entry name" value="Nucleotidylyl transferase"/>
    <property type="match status" value="1"/>
</dbReference>
<dbReference type="PROSITE" id="PS00178">
    <property type="entry name" value="AA_TRNA_LIGASE_I"/>
    <property type="match status" value="1"/>
</dbReference>
<dbReference type="PROSITE" id="PS50886">
    <property type="entry name" value="TRBD"/>
    <property type="match status" value="1"/>
</dbReference>
<keyword id="KW-0030">Aminoacyl-tRNA synthetase</keyword>
<keyword id="KW-0067">ATP-binding</keyword>
<keyword id="KW-0963">Cytoplasm</keyword>
<keyword id="KW-0436">Ligase</keyword>
<keyword id="KW-0479">Metal-binding</keyword>
<keyword id="KW-0547">Nucleotide-binding</keyword>
<keyword id="KW-0648">Protein biosynthesis</keyword>
<keyword id="KW-0694">RNA-binding</keyword>
<keyword id="KW-0820">tRNA-binding</keyword>
<keyword id="KW-0862">Zinc</keyword>
<protein>
    <recommendedName>
        <fullName evidence="1">Methionine--tRNA ligase</fullName>
        <ecNumber evidence="1">6.1.1.10</ecNumber>
    </recommendedName>
    <alternativeName>
        <fullName evidence="1">Methionyl-tRNA synthetase</fullName>
        <shortName evidence="1">MetRS</shortName>
    </alternativeName>
</protein>
<sequence>MNSSSSHRNILVTSALPYANGPIHLGHVLEGIQTDIWVRFQKAIGNECYFFCADDTHGTPVMLAARKEGITPEQLIERVGQEHYRDLTSFGIEYDHYDSTHSKANQEISKDIYLKLKSKGHISRRSIEQSYCETDKMFLPDRFIKGTCPNCKSKDQYGDNCEVCGATYSPKDLIDSHCSLCGTSPVVKNSDHIFFKLGDFHKKDEKSTSLETINPSHLKTDFDLQSWIETSGVVSESEGVKKKLKEWFDAGLQDWDISRDGPYFGFEIPDETNKYFYVWLDAPIGYMASSKNFFEKNFPNEPNKFDSFWKNKNSEIVHFIGKDILYFHTLFWPAMLEGSDYRAPSKVHVHGFIGVNGEKMSKSRGTFIKAETFVKYLDPEHLRFYLASKLGPGMDDIDLSFEDFINKVNSDLVGNLINSVSRVSTTILDALDRTLGVVSKEGLALIEEILYQTVKFGPGEDSIQNIIKYAYDQRNYAKVLREITRLGDRVNRYVNDNAPWKLIKENPEKAREVVTVTLNASRFLAIYLYPVVPKISEQIYKLLNLQDSPSFKDLDKNRILENIKVLPYEMISKRVDEKAIKVMLEENKQSEHSKKVETSENPVPEERLEISIDDLSKVELRVGQIVEAGPVDGADKLVNVKVDLGELGIKNVFAGIKVAYQPENLKGLKVVVVANLKPRKMKFGISEAMLLASGEGESLSLFIPHKDAKPGDRLK</sequence>